<sequence length="307" mass="34518">MLRLKTQDSRLKTQDSRLKTQDSRLKTQDSRLKTQDSRLKTQDSRLKTQDSRLKTQDSRLKTQDSRLKTQDSRLKTQDSRLKTQDSRLKTQDSFSVDDNGSGNVFVCGDLVNSKENKVQFNGNNNKLIIEDDVECRWLTVIFRGDNNYVRIHKNSKIKGDIVATKGSKVIIGRRTTIGAGFEVVTDKCNVTIGHDCMIARDVILRASDGHPIFDIHSKKRINWAKDIIISSYVWVGRNVSIMKGVSVGSGSVIGYGSIVTKDVPSMCAAAGNPAKIIKRNIIWARTDKAELISDDKRCSSYHAKLTQ</sequence>
<proteinExistence type="evidence at protein level"/>
<protein>
    <recommendedName>
        <fullName evidence="6 7">Polysialic acid O-acetyltransferase</fullName>
        <ecNumber evidence="3 4">2.3.1.136</ecNumber>
    </recommendedName>
    <alternativeName>
        <fullName evidence="11">Capsule O-acetyl transferase</fullName>
    </alternativeName>
</protein>
<gene>
    <name evidence="6 7" type="primary">neuO</name>
    <name evidence="8" type="ordered locus">Ecok1_22420</name>
    <name evidence="10" type="ORF">APECO1_4217</name>
</gene>
<dbReference type="EC" id="2.3.1.136" evidence="3 4"/>
<dbReference type="EMBL" id="AY779018">
    <property type="protein sequence ID" value="AAX11174.1"/>
    <property type="molecule type" value="Genomic_DNA"/>
</dbReference>
<dbReference type="EMBL" id="AJ851330">
    <property type="protein sequence ID" value="CAH65463.1"/>
    <property type="molecule type" value="Genomic_DNA"/>
</dbReference>
<dbReference type="EMBL" id="CP000468">
    <property type="protein sequence ID" value="ABJ01736.1"/>
    <property type="molecule type" value="Genomic_DNA"/>
</dbReference>
<dbReference type="RefSeq" id="WP_000944990.1">
    <property type="nucleotide sequence ID" value="NC_008563.1"/>
</dbReference>
<dbReference type="PDB" id="3JQY">
    <property type="method" value="X-ray"/>
    <property type="resolution" value="1.70 A"/>
    <property type="chains" value="A/B/C=66-307"/>
</dbReference>
<dbReference type="PDBsum" id="3JQY"/>
<dbReference type="SMR" id="A1ADJ6"/>
<dbReference type="KEGG" id="ecv:APECO1_4217"/>
<dbReference type="HOGENOM" id="CLU_051638_6_0_6"/>
<dbReference type="BioCyc" id="MetaCyc:MONOMER-22172"/>
<dbReference type="BRENDA" id="2.3.1.136">
    <property type="organism ID" value="2026"/>
</dbReference>
<dbReference type="EvolutionaryTrace" id="A1ADJ6"/>
<dbReference type="Proteomes" id="UP000008216">
    <property type="component" value="Chromosome"/>
</dbReference>
<dbReference type="GO" id="GO:0050208">
    <property type="term" value="F:polysialic-acid O-acetyltransferase activity"/>
    <property type="evidence" value="ECO:0000314"/>
    <property type="project" value="UniProtKB"/>
</dbReference>
<dbReference type="CDD" id="cd04647">
    <property type="entry name" value="LbH_MAT_like"/>
    <property type="match status" value="1"/>
</dbReference>
<dbReference type="FunFam" id="2.160.10.10:FF:000043">
    <property type="entry name" value="K1 capsule O-acetyltransferase"/>
    <property type="match status" value="1"/>
</dbReference>
<dbReference type="Gene3D" id="1.20.5.340">
    <property type="match status" value="1"/>
</dbReference>
<dbReference type="Gene3D" id="2.160.10.10">
    <property type="entry name" value="Hexapeptide repeat proteins"/>
    <property type="match status" value="1"/>
</dbReference>
<dbReference type="InterPro" id="IPR018357">
    <property type="entry name" value="Hexapep_transf_CS"/>
</dbReference>
<dbReference type="InterPro" id="IPR051159">
    <property type="entry name" value="Hexapeptide_acetyltransf"/>
</dbReference>
<dbReference type="InterPro" id="IPR011004">
    <property type="entry name" value="Trimer_LpxA-like_sf"/>
</dbReference>
<dbReference type="PANTHER" id="PTHR23416:SF78">
    <property type="entry name" value="LIPOPOLYSACCHARIDE BIOSYNTHESIS O-ACETYL TRANSFERASE WBBJ-RELATED"/>
    <property type="match status" value="1"/>
</dbReference>
<dbReference type="PANTHER" id="PTHR23416">
    <property type="entry name" value="SIALIC ACID SYNTHASE-RELATED"/>
    <property type="match status" value="1"/>
</dbReference>
<dbReference type="SUPFAM" id="SSF51161">
    <property type="entry name" value="Trimeric LpxA-like enzymes"/>
    <property type="match status" value="1"/>
</dbReference>
<dbReference type="SUPFAM" id="SSF57997">
    <property type="entry name" value="Tropomyosin"/>
    <property type="match status" value="1"/>
</dbReference>
<dbReference type="PROSITE" id="PS00101">
    <property type="entry name" value="HEXAPEP_TRANSFERASES"/>
    <property type="match status" value="1"/>
</dbReference>
<evidence type="ECO:0000250" key="1">
    <source>
        <dbReference type="UniProtKB" id="Q93S40"/>
    </source>
</evidence>
<evidence type="ECO:0000256" key="2">
    <source>
        <dbReference type="SAM" id="MobiDB-lite"/>
    </source>
</evidence>
<evidence type="ECO:0000269" key="3">
    <source>
    </source>
</evidence>
<evidence type="ECO:0000269" key="4">
    <source>
    </source>
</evidence>
<evidence type="ECO:0000269" key="5">
    <source>
    </source>
</evidence>
<evidence type="ECO:0000303" key="6">
    <source>
    </source>
</evidence>
<evidence type="ECO:0000303" key="7">
    <source>
    </source>
</evidence>
<evidence type="ECO:0000305" key="8"/>
<evidence type="ECO:0000312" key="9">
    <source>
        <dbReference type="EMBL" id="AAX11174.1"/>
    </source>
</evidence>
<evidence type="ECO:0000312" key="10">
    <source>
        <dbReference type="EMBL" id="ABJ01736.1"/>
    </source>
</evidence>
<evidence type="ECO:0000312" key="11">
    <source>
        <dbReference type="EMBL" id="CAH65463.1"/>
    </source>
</evidence>
<evidence type="ECO:0007829" key="12">
    <source>
        <dbReference type="PDB" id="3JQY"/>
    </source>
</evidence>
<accession>A1ADJ6</accession>
<accession>Q4A3R7</accession>
<accession>Q58WP5</accession>
<name>NEUO_ECOK1</name>
<reference key="1">
    <citation type="journal article" date="2005" name="Proc. Natl. Acad. Sci. U.S.A.">
        <title>Escherichia coli K1 polysialic acid O-acetyltransferase gene, neuO, and the mechanism of capsule form variation involving a mobile contingency locus.</title>
        <authorList>
            <person name="Deszo E.L."/>
            <person name="Steenbergen S.M."/>
            <person name="Freedberg D.I."/>
            <person name="Vimr E.R."/>
        </authorList>
    </citation>
    <scope>NUCLEOTIDE SEQUENCE [GENOMIC DNA]</scope>
    <scope>FUNCTION</scope>
    <scope>CATALYTIC ACTIVITY</scope>
    <source>
        <strain evidence="9">RS164</strain>
    </source>
</reference>
<reference key="2">
    <citation type="journal article" date="2007" name="J. Biol. Chem.">
        <title>Biochemical characterization of the polysialic acid-specific O-acetyltransferase NeuO of Escherichia coli K1.</title>
        <authorList>
            <person name="Bergfeld A.K."/>
            <person name="Claus H."/>
            <person name="Vogel U."/>
            <person name="Muhlenhoff M."/>
        </authorList>
    </citation>
    <scope>NUCLEOTIDE SEQUENCE [GENOMIC DNA]</scope>
    <scope>FUNCTION</scope>
    <scope>CATALYTIC ACTIVITY</scope>
    <scope>BIOPHYSICOCHEMICAL PROPERTIES</scope>
    <scope>SUBUNIT</scope>
    <scope>MUTAGENESIS OF HIS-210 AND TRP-234</scope>
</reference>
<reference key="3">
    <citation type="journal article" date="2007" name="J. Bacteriol.">
        <title>The genome sequence of avian pathogenic Escherichia coli strain O1:K1:H7 shares strong similarities with human extraintestinal pathogenic E. coli genomes.</title>
        <authorList>
            <person name="Johnson T.J."/>
            <person name="Kariyawasam S."/>
            <person name="Wannemuehler Y."/>
            <person name="Mangiamele P."/>
            <person name="Johnson S.J."/>
            <person name="Doetkott C."/>
            <person name="Skyberg J.A."/>
            <person name="Lynne A.M."/>
            <person name="Johnson J.R."/>
            <person name="Nolan L.K."/>
        </authorList>
    </citation>
    <scope>NUCLEOTIDE SEQUENCE [LARGE SCALE GENOMIC DNA]</scope>
</reference>
<reference key="4">
    <citation type="journal article" date="2011" name="PLoS ONE">
        <title>Crystal structure analysis of the polysialic acid specific O-acetyltransferase NeuO.</title>
        <authorList>
            <person name="Schulz E.C."/>
            <person name="Bergfeld A.K."/>
            <person name="Ficner R."/>
            <person name="Muehlenhoff M."/>
        </authorList>
    </citation>
    <scope>X-RAY CRYSTALLOGRAPHY (1.70 ANGSTROMS) OF 66-307</scope>
    <scope>SUBUNIT</scope>
</reference>
<keyword id="KW-0002">3D-structure</keyword>
<keyword id="KW-1185">Reference proteome</keyword>
<keyword id="KW-0677">Repeat</keyword>
<keyword id="KW-0808">Transferase</keyword>
<organism>
    <name type="scientific">Escherichia coli O1:K1 / APEC</name>
    <dbReference type="NCBI Taxonomy" id="405955"/>
    <lineage>
        <taxon>Bacteria</taxon>
        <taxon>Pseudomonadati</taxon>
        <taxon>Pseudomonadota</taxon>
        <taxon>Gammaproteobacteria</taxon>
        <taxon>Enterobacterales</taxon>
        <taxon>Enterobacteriaceae</taxon>
        <taxon>Escherichia</taxon>
    </lineage>
</organism>
<comment type="function">
    <text evidence="3 4">Catalyzes the O-acetylation of capsular polymeric sialic acid. Shows high substrate specificity toward polymers of sialic acid that contains a large number of residues.</text>
</comment>
<comment type="catalytic activity">
    <reaction evidence="3 4">
        <text>[N-acetyl-alpha-D-neuraminosyl-(2-&gt;8)](n) + n acetyl-CoA = [N,O(9)-diacetyl-alpha-D-neuraminosyl-(2-&gt;8)](n) + n CoA</text>
        <dbReference type="Rhea" id="RHEA:11608"/>
        <dbReference type="Rhea" id="RHEA-COMP:14315"/>
        <dbReference type="Rhea" id="RHEA-COMP:14317"/>
        <dbReference type="ChEBI" id="CHEBI:57287"/>
        <dbReference type="ChEBI" id="CHEBI:57288"/>
        <dbReference type="ChEBI" id="CHEBI:139252"/>
        <dbReference type="ChEBI" id="CHEBI:139286"/>
        <dbReference type="EC" id="2.3.1.136"/>
    </reaction>
</comment>
<comment type="catalytic activity">
    <reaction evidence="3 4">
        <text>[N-acetyl-alpha-D-neuraminosyl-(2-&gt;8)](n) + n acetyl-CoA = [O(7),N-diacetyl-alpha-D-neuraminosyl-(2-&gt;8)](n) + n CoA</text>
        <dbReference type="Rhea" id="RHEA:11604"/>
        <dbReference type="Rhea" id="RHEA-COMP:14315"/>
        <dbReference type="Rhea" id="RHEA-COMP:14316"/>
        <dbReference type="ChEBI" id="CHEBI:57287"/>
        <dbReference type="ChEBI" id="CHEBI:57288"/>
        <dbReference type="ChEBI" id="CHEBI:139252"/>
        <dbReference type="ChEBI" id="CHEBI:139285"/>
        <dbReference type="EC" id="2.3.1.136"/>
    </reaction>
</comment>
<comment type="biophysicochemical properties">
    <kinetics>
        <KM evidence="4">0.4 mM for acetyl-CoA</KM>
        <KM evidence="4">1.17 mM for polymer of sialic acid</KM>
        <text evidence="4">kcat is 0.51 sec(-1) with acetyl-CoA as substrate. kcat is 1.99 sec(-1) with polymer of sialic acid as substrate.</text>
    </kinetics>
</comment>
<comment type="subunit">
    <text evidence="5 7">Homotrimer (PubMed:21390252). Hexamer formed by two homotrimers (PubMed:17519228).</text>
</comment>
<comment type="miscellaneous">
    <text evidence="6 7">Polymeric sialic acid-containing capsule provides a means for the bacteria to evade the immune response during infection by mimicking host sialic acid-containing cell surface structures. O-acetylation of the sialic acid residues of capsular polysaccharides alters their immunogenicity and susceptibility to glycosidases.</text>
</comment>
<comment type="miscellaneous">
    <text evidence="3 4">The catalytic efficiency increases linearly with the number of RLKTQDS repeats.</text>
</comment>
<comment type="similarity">
    <text evidence="8">Belongs to the transferase hexapeptide repeat family.</text>
</comment>
<feature type="chain" id="PRO_0000430771" description="Polysialic acid O-acetyltransferase">
    <location>
        <begin position="1"/>
        <end position="307"/>
    </location>
</feature>
<feature type="repeat" description="1">
    <location>
        <begin position="3"/>
        <end position="9"/>
    </location>
</feature>
<feature type="repeat" description="2">
    <location>
        <begin position="10"/>
        <end position="16"/>
    </location>
</feature>
<feature type="repeat" description="3">
    <location>
        <begin position="17"/>
        <end position="23"/>
    </location>
</feature>
<feature type="repeat" description="4">
    <location>
        <begin position="24"/>
        <end position="30"/>
    </location>
</feature>
<feature type="repeat" description="5">
    <location>
        <begin position="31"/>
        <end position="37"/>
    </location>
</feature>
<feature type="repeat" description="6">
    <location>
        <begin position="38"/>
        <end position="44"/>
    </location>
</feature>
<feature type="repeat" description="7">
    <location>
        <begin position="45"/>
        <end position="51"/>
    </location>
</feature>
<feature type="repeat" description="8">
    <location>
        <begin position="52"/>
        <end position="58"/>
    </location>
</feature>
<feature type="repeat" description="9">
    <location>
        <begin position="59"/>
        <end position="65"/>
    </location>
</feature>
<feature type="repeat" description="10">
    <location>
        <begin position="66"/>
        <end position="72"/>
    </location>
</feature>
<feature type="repeat" description="11">
    <location>
        <begin position="73"/>
        <end position="79"/>
    </location>
</feature>
<feature type="repeat" description="12">
    <location>
        <begin position="80"/>
        <end position="86"/>
    </location>
</feature>
<feature type="repeat" description="13">
    <location>
        <begin position="87"/>
        <end position="93"/>
    </location>
</feature>
<feature type="region of interest" description="Disordered" evidence="2">
    <location>
        <begin position="1"/>
        <end position="95"/>
    </location>
</feature>
<feature type="region of interest" description="13 X 7 AA tandem repeat of RLKTQDS encoded by a 7 nucleotide repeat">
    <location>
        <begin position="3"/>
        <end position="93"/>
    </location>
</feature>
<feature type="compositionally biased region" description="Basic and acidic residues" evidence="2">
    <location>
        <begin position="1"/>
        <end position="90"/>
    </location>
</feature>
<feature type="binding site" evidence="1">
    <location>
        <begin position="208"/>
        <end position="210"/>
    </location>
    <ligand>
        <name>acetyl-CoA</name>
        <dbReference type="ChEBI" id="CHEBI:57288"/>
    </ligand>
</feature>
<feature type="binding site" evidence="1">
    <location>
        <position position="237"/>
    </location>
    <ligand>
        <name>acetyl-CoA</name>
        <dbReference type="ChEBI" id="CHEBI:57288"/>
    </ligand>
</feature>
<feature type="binding site" evidence="1">
    <location>
        <position position="243"/>
    </location>
    <ligand>
        <name>acetyl-CoA</name>
        <dbReference type="ChEBI" id="CHEBI:57288"/>
    </ligand>
</feature>
<feature type="binding site" evidence="1">
    <location>
        <position position="261"/>
    </location>
    <ligand>
        <name>acetyl-CoA</name>
        <dbReference type="ChEBI" id="CHEBI:57288"/>
    </ligand>
</feature>
<feature type="binding site" evidence="1">
    <location>
        <position position="278"/>
    </location>
    <ligand>
        <name>acetyl-CoA</name>
        <dbReference type="ChEBI" id="CHEBI:57288"/>
    </ligand>
</feature>
<feature type="mutagenesis site" description="Loss of activity." evidence="4">
    <original>H</original>
    <variation>A</variation>
    <location>
        <position position="210"/>
    </location>
</feature>
<feature type="mutagenesis site" description="Loss of activity." evidence="4">
    <original>W</original>
    <variation>A</variation>
    <location>
        <position position="234"/>
    </location>
</feature>
<feature type="sequence conflict" description="In Ref. 1; AAX11174." ref="1">
    <location>
        <begin position="4"/>
        <end position="24"/>
    </location>
</feature>
<feature type="sequence conflict" description="In Ref. 2; CAH65463." ref="2">
    <location>
        <begin position="4"/>
        <end position="10"/>
    </location>
</feature>
<feature type="strand" evidence="12">
    <location>
        <begin position="94"/>
        <end position="98"/>
    </location>
</feature>
<feature type="strand" evidence="12">
    <location>
        <begin position="100"/>
        <end position="102"/>
    </location>
</feature>
<feature type="strand" evidence="12">
    <location>
        <begin position="104"/>
        <end position="107"/>
    </location>
</feature>
<feature type="strand" evidence="12">
    <location>
        <begin position="114"/>
        <end position="124"/>
    </location>
</feature>
<feature type="strand" evidence="12">
    <location>
        <begin position="126"/>
        <end position="129"/>
    </location>
</feature>
<feature type="strand" evidence="12">
    <location>
        <begin position="134"/>
        <end position="146"/>
    </location>
</feature>
<feature type="strand" evidence="12">
    <location>
        <begin position="148"/>
        <end position="151"/>
    </location>
</feature>
<feature type="strand" evidence="12">
    <location>
        <begin position="156"/>
        <end position="166"/>
    </location>
</feature>
<feature type="strand" evidence="12">
    <location>
        <begin position="168"/>
        <end position="171"/>
    </location>
</feature>
<feature type="strand" evidence="12">
    <location>
        <begin position="182"/>
        <end position="184"/>
    </location>
</feature>
<feature type="strand" evidence="12">
    <location>
        <begin position="186"/>
        <end position="192"/>
    </location>
</feature>
<feature type="strand" evidence="12">
    <location>
        <begin position="200"/>
        <end position="205"/>
    </location>
</feature>
<feature type="strand" evidence="12">
    <location>
        <begin position="212"/>
        <end position="214"/>
    </location>
</feature>
<feature type="turn" evidence="12">
    <location>
        <begin position="215"/>
        <end position="217"/>
    </location>
</feature>
<feature type="strand" evidence="12">
    <location>
        <begin position="227"/>
        <end position="229"/>
    </location>
</feature>
<feature type="strand" evidence="12">
    <location>
        <begin position="237"/>
        <end position="241"/>
    </location>
</feature>
<feature type="strand" evidence="12">
    <location>
        <begin position="267"/>
        <end position="270"/>
    </location>
</feature>
<feature type="turn" evidence="12">
    <location>
        <begin position="271"/>
        <end position="274"/>
    </location>
</feature>
<feature type="strand" evidence="12">
    <location>
        <begin position="275"/>
        <end position="283"/>
    </location>
</feature>
<feature type="helix" evidence="12">
    <location>
        <begin position="292"/>
        <end position="294"/>
    </location>
</feature>
<feature type="helix" evidence="12">
    <location>
        <begin position="296"/>
        <end position="307"/>
    </location>
</feature>